<proteinExistence type="inferred from homology"/>
<organism>
    <name type="scientific">Salmonella paratyphi A (strain ATCC 9150 / SARB42)</name>
    <dbReference type="NCBI Taxonomy" id="295319"/>
    <lineage>
        <taxon>Bacteria</taxon>
        <taxon>Pseudomonadati</taxon>
        <taxon>Pseudomonadota</taxon>
        <taxon>Gammaproteobacteria</taxon>
        <taxon>Enterobacterales</taxon>
        <taxon>Enterobacteriaceae</taxon>
        <taxon>Salmonella</taxon>
    </lineage>
</organism>
<feature type="chain" id="PRO_1000011958" description="Diaminopimelate epimerase">
    <location>
        <begin position="1"/>
        <end position="274"/>
    </location>
</feature>
<feature type="active site" description="Proton donor" evidence="1">
    <location>
        <position position="73"/>
    </location>
</feature>
<feature type="active site" description="Proton acceptor" evidence="1">
    <location>
        <position position="217"/>
    </location>
</feature>
<feature type="binding site" evidence="1">
    <location>
        <position position="11"/>
    </location>
    <ligand>
        <name>substrate</name>
    </ligand>
</feature>
<feature type="binding site" evidence="1">
    <location>
        <position position="44"/>
    </location>
    <ligand>
        <name>substrate</name>
    </ligand>
</feature>
<feature type="binding site" evidence="1">
    <location>
        <position position="64"/>
    </location>
    <ligand>
        <name>substrate</name>
    </ligand>
</feature>
<feature type="binding site" evidence="1">
    <location>
        <begin position="74"/>
        <end position="75"/>
    </location>
    <ligand>
        <name>substrate</name>
    </ligand>
</feature>
<feature type="binding site" evidence="1">
    <location>
        <position position="157"/>
    </location>
    <ligand>
        <name>substrate</name>
    </ligand>
</feature>
<feature type="binding site" evidence="1">
    <location>
        <position position="190"/>
    </location>
    <ligand>
        <name>substrate</name>
    </ligand>
</feature>
<feature type="binding site" evidence="1">
    <location>
        <begin position="208"/>
        <end position="209"/>
    </location>
    <ligand>
        <name>substrate</name>
    </ligand>
</feature>
<feature type="binding site" evidence="1">
    <location>
        <begin position="218"/>
        <end position="219"/>
    </location>
    <ligand>
        <name>substrate</name>
    </ligand>
</feature>
<feature type="site" description="Could be important to modulate the pK values of the two catalytic cysteine residues" evidence="1">
    <location>
        <position position="159"/>
    </location>
</feature>
<feature type="site" description="Could be important to modulate the pK values of the two catalytic cysteine residues" evidence="1">
    <location>
        <position position="208"/>
    </location>
</feature>
<feature type="site" description="Important for dimerization" evidence="1">
    <location>
        <position position="268"/>
    </location>
</feature>
<accession>Q5PKM6</accession>
<name>DAPF_SALPA</name>
<evidence type="ECO:0000255" key="1">
    <source>
        <dbReference type="HAMAP-Rule" id="MF_00197"/>
    </source>
</evidence>
<reference key="1">
    <citation type="journal article" date="2004" name="Nat. Genet.">
        <title>Comparison of genome degradation in Paratyphi A and Typhi, human-restricted serovars of Salmonella enterica that cause typhoid.</title>
        <authorList>
            <person name="McClelland M."/>
            <person name="Sanderson K.E."/>
            <person name="Clifton S.W."/>
            <person name="Latreille P."/>
            <person name="Porwollik S."/>
            <person name="Sabo A."/>
            <person name="Meyer R."/>
            <person name="Bieri T."/>
            <person name="Ozersky P."/>
            <person name="McLellan M."/>
            <person name="Harkins C.R."/>
            <person name="Wang C."/>
            <person name="Nguyen C."/>
            <person name="Berghoff A."/>
            <person name="Elliott G."/>
            <person name="Kohlberg S."/>
            <person name="Strong C."/>
            <person name="Du F."/>
            <person name="Carter J."/>
            <person name="Kremizki C."/>
            <person name="Layman D."/>
            <person name="Leonard S."/>
            <person name="Sun H."/>
            <person name="Fulton L."/>
            <person name="Nash W."/>
            <person name="Miner T."/>
            <person name="Minx P."/>
            <person name="Delehaunty K."/>
            <person name="Fronick C."/>
            <person name="Magrini V."/>
            <person name="Nhan M."/>
            <person name="Warren W."/>
            <person name="Florea L."/>
            <person name="Spieth J."/>
            <person name="Wilson R.K."/>
        </authorList>
    </citation>
    <scope>NUCLEOTIDE SEQUENCE [LARGE SCALE GENOMIC DNA]</scope>
    <source>
        <strain>ATCC 9150 / SARB42</strain>
    </source>
</reference>
<sequence>MQFSKMHGLGNDFMVVDAVTQNVFFSPELIRRLSDRHLGVGFDQLLVVEPPYDPELDFHYRIFNADGSEVSQCGNGARCFARFVRLKGLTNKRDIRVSTANGRMVLSVTEDELVRVNMGEPNFEPAQVPFRANKAEKTYIMRAAEQTILCGVVSMGNPHCVIQVDNVDTAAVETLGPVLESHERFPERANIGFMQVVRREHIRLRVYERGAGETRACGSGACAAVAVGIQQGLLAEEVRVELPGGRLDIAWKGPGHPLYMTGPAAHIYDGFIHL</sequence>
<dbReference type="EC" id="5.1.1.7" evidence="1"/>
<dbReference type="EMBL" id="CP000026">
    <property type="protein sequence ID" value="AAV79564.1"/>
    <property type="molecule type" value="Genomic_DNA"/>
</dbReference>
<dbReference type="RefSeq" id="WP_001160671.1">
    <property type="nucleotide sequence ID" value="NC_006511.1"/>
</dbReference>
<dbReference type="SMR" id="Q5PKM6"/>
<dbReference type="KEGG" id="spt:SPA3788"/>
<dbReference type="HOGENOM" id="CLU_053306_1_1_6"/>
<dbReference type="UniPathway" id="UPA00034">
    <property type="reaction ID" value="UER00025"/>
</dbReference>
<dbReference type="Proteomes" id="UP000008185">
    <property type="component" value="Chromosome"/>
</dbReference>
<dbReference type="GO" id="GO:0005829">
    <property type="term" value="C:cytosol"/>
    <property type="evidence" value="ECO:0007669"/>
    <property type="project" value="TreeGrafter"/>
</dbReference>
<dbReference type="GO" id="GO:0008837">
    <property type="term" value="F:diaminopimelate epimerase activity"/>
    <property type="evidence" value="ECO:0007669"/>
    <property type="project" value="UniProtKB-UniRule"/>
</dbReference>
<dbReference type="GO" id="GO:0009089">
    <property type="term" value="P:lysine biosynthetic process via diaminopimelate"/>
    <property type="evidence" value="ECO:0007669"/>
    <property type="project" value="UniProtKB-UniRule"/>
</dbReference>
<dbReference type="FunFam" id="3.10.310.10:FF:000001">
    <property type="entry name" value="Diaminopimelate epimerase"/>
    <property type="match status" value="1"/>
</dbReference>
<dbReference type="FunFam" id="3.10.310.10:FF:000002">
    <property type="entry name" value="Diaminopimelate epimerase"/>
    <property type="match status" value="1"/>
</dbReference>
<dbReference type="Gene3D" id="3.10.310.10">
    <property type="entry name" value="Diaminopimelate Epimerase, Chain A, domain 1"/>
    <property type="match status" value="2"/>
</dbReference>
<dbReference type="HAMAP" id="MF_00197">
    <property type="entry name" value="DAP_epimerase"/>
    <property type="match status" value="1"/>
</dbReference>
<dbReference type="InterPro" id="IPR018510">
    <property type="entry name" value="DAP_epimerase_AS"/>
</dbReference>
<dbReference type="InterPro" id="IPR001653">
    <property type="entry name" value="DAP_epimerase_DapF"/>
</dbReference>
<dbReference type="NCBIfam" id="TIGR00652">
    <property type="entry name" value="DapF"/>
    <property type="match status" value="1"/>
</dbReference>
<dbReference type="PANTHER" id="PTHR31689:SF0">
    <property type="entry name" value="DIAMINOPIMELATE EPIMERASE"/>
    <property type="match status" value="1"/>
</dbReference>
<dbReference type="PANTHER" id="PTHR31689">
    <property type="entry name" value="DIAMINOPIMELATE EPIMERASE, CHLOROPLASTIC"/>
    <property type="match status" value="1"/>
</dbReference>
<dbReference type="Pfam" id="PF01678">
    <property type="entry name" value="DAP_epimerase"/>
    <property type="match status" value="2"/>
</dbReference>
<dbReference type="SUPFAM" id="SSF54506">
    <property type="entry name" value="Diaminopimelate epimerase-like"/>
    <property type="match status" value="1"/>
</dbReference>
<dbReference type="PROSITE" id="PS01326">
    <property type="entry name" value="DAP_EPIMERASE"/>
    <property type="match status" value="1"/>
</dbReference>
<keyword id="KW-0028">Amino-acid biosynthesis</keyword>
<keyword id="KW-0963">Cytoplasm</keyword>
<keyword id="KW-0413">Isomerase</keyword>
<keyword id="KW-0457">Lysine biosynthesis</keyword>
<protein>
    <recommendedName>
        <fullName evidence="1">Diaminopimelate epimerase</fullName>
        <shortName evidence="1">DAP epimerase</shortName>
        <ecNumber evidence="1">5.1.1.7</ecNumber>
    </recommendedName>
    <alternativeName>
        <fullName evidence="1">PLP-independent amino acid racemase</fullName>
    </alternativeName>
</protein>
<gene>
    <name evidence="1" type="primary">dapF</name>
    <name type="ordered locus">SPA3788</name>
</gene>
<comment type="function">
    <text evidence="1">Catalyzes the stereoinversion of LL-2,6-diaminopimelate (L,L-DAP) to meso-diaminopimelate (meso-DAP), a precursor of L-lysine and an essential component of the bacterial peptidoglycan.</text>
</comment>
<comment type="catalytic activity">
    <reaction evidence="1">
        <text>(2S,6S)-2,6-diaminopimelate = meso-2,6-diaminopimelate</text>
        <dbReference type="Rhea" id="RHEA:15393"/>
        <dbReference type="ChEBI" id="CHEBI:57609"/>
        <dbReference type="ChEBI" id="CHEBI:57791"/>
        <dbReference type="EC" id="5.1.1.7"/>
    </reaction>
</comment>
<comment type="pathway">
    <text evidence="1">Amino-acid biosynthesis; L-lysine biosynthesis via DAP pathway; DL-2,6-diaminopimelate from LL-2,6-diaminopimelate: step 1/1.</text>
</comment>
<comment type="subunit">
    <text evidence="1">Homodimer.</text>
</comment>
<comment type="subcellular location">
    <subcellularLocation>
        <location evidence="1">Cytoplasm</location>
    </subcellularLocation>
</comment>
<comment type="similarity">
    <text evidence="1">Belongs to the diaminopimelate epimerase family.</text>
</comment>